<feature type="chain" id="PRO_0000206759" description="Putative vesicle-associated membrane protein 726">
    <location>
        <begin position="1"/>
        <end position="220"/>
    </location>
</feature>
<feature type="topological domain" description="Cytoplasmic" evidence="3">
    <location>
        <begin position="1"/>
        <end position="196"/>
    </location>
</feature>
<feature type="transmembrane region" description="Helical; Anchor for type IV membrane protein" evidence="3">
    <location>
        <begin position="197"/>
        <end position="217"/>
    </location>
</feature>
<feature type="topological domain" description="Vesicular" evidence="3">
    <location>
        <begin position="218"/>
        <end position="220"/>
    </location>
</feature>
<feature type="domain" description="Longin" evidence="4">
    <location>
        <begin position="10"/>
        <end position="114"/>
    </location>
</feature>
<feature type="domain" description="v-SNARE coiled-coil homology" evidence="5">
    <location>
        <begin position="130"/>
        <end position="190"/>
    </location>
</feature>
<accession>Q9MAS5</accession>
<reference key="1">
    <citation type="journal article" date="2000" name="Nature">
        <title>Sequence and analysis of chromosome 1 of the plant Arabidopsis thaliana.</title>
        <authorList>
            <person name="Theologis A."/>
            <person name="Ecker J.R."/>
            <person name="Palm C.J."/>
            <person name="Federspiel N.A."/>
            <person name="Kaul S."/>
            <person name="White O."/>
            <person name="Alonso J."/>
            <person name="Altafi H."/>
            <person name="Araujo R."/>
            <person name="Bowman C.L."/>
            <person name="Brooks S.Y."/>
            <person name="Buehler E."/>
            <person name="Chan A."/>
            <person name="Chao Q."/>
            <person name="Chen H."/>
            <person name="Cheuk R.F."/>
            <person name="Chin C.W."/>
            <person name="Chung M.K."/>
            <person name="Conn L."/>
            <person name="Conway A.B."/>
            <person name="Conway A.R."/>
            <person name="Creasy T.H."/>
            <person name="Dewar K."/>
            <person name="Dunn P."/>
            <person name="Etgu P."/>
            <person name="Feldblyum T.V."/>
            <person name="Feng J.-D."/>
            <person name="Fong B."/>
            <person name="Fujii C.Y."/>
            <person name="Gill J.E."/>
            <person name="Goldsmith A.D."/>
            <person name="Haas B."/>
            <person name="Hansen N.F."/>
            <person name="Hughes B."/>
            <person name="Huizar L."/>
            <person name="Hunter J.L."/>
            <person name="Jenkins J."/>
            <person name="Johnson-Hopson C."/>
            <person name="Khan S."/>
            <person name="Khaykin E."/>
            <person name="Kim C.J."/>
            <person name="Koo H.L."/>
            <person name="Kremenetskaia I."/>
            <person name="Kurtz D.B."/>
            <person name="Kwan A."/>
            <person name="Lam B."/>
            <person name="Langin-Hooper S."/>
            <person name="Lee A."/>
            <person name="Lee J.M."/>
            <person name="Lenz C.A."/>
            <person name="Li J.H."/>
            <person name="Li Y.-P."/>
            <person name="Lin X."/>
            <person name="Liu S.X."/>
            <person name="Liu Z.A."/>
            <person name="Luros J.S."/>
            <person name="Maiti R."/>
            <person name="Marziali A."/>
            <person name="Militscher J."/>
            <person name="Miranda M."/>
            <person name="Nguyen M."/>
            <person name="Nierman W.C."/>
            <person name="Osborne B.I."/>
            <person name="Pai G."/>
            <person name="Peterson J."/>
            <person name="Pham P.K."/>
            <person name="Rizzo M."/>
            <person name="Rooney T."/>
            <person name="Rowley D."/>
            <person name="Sakano H."/>
            <person name="Salzberg S.L."/>
            <person name="Schwartz J.R."/>
            <person name="Shinn P."/>
            <person name="Southwick A.M."/>
            <person name="Sun H."/>
            <person name="Tallon L.J."/>
            <person name="Tambunga G."/>
            <person name="Toriumi M.J."/>
            <person name="Town C.D."/>
            <person name="Utterback T."/>
            <person name="Van Aken S."/>
            <person name="Vaysberg M."/>
            <person name="Vysotskaia V.S."/>
            <person name="Walker M."/>
            <person name="Wu D."/>
            <person name="Yu G."/>
            <person name="Fraser C.M."/>
            <person name="Venter J.C."/>
            <person name="Davis R.W."/>
        </authorList>
    </citation>
    <scope>NUCLEOTIDE SEQUENCE [LARGE SCALE GENOMIC DNA]</scope>
    <source>
        <strain>cv. Columbia</strain>
    </source>
</reference>
<reference key="2">
    <citation type="journal article" date="2017" name="Plant J.">
        <title>Araport11: a complete reannotation of the Arabidopsis thaliana reference genome.</title>
        <authorList>
            <person name="Cheng C.Y."/>
            <person name="Krishnakumar V."/>
            <person name="Chan A.P."/>
            <person name="Thibaud-Nissen F."/>
            <person name="Schobel S."/>
            <person name="Town C.D."/>
        </authorList>
    </citation>
    <scope>GENOME REANNOTATION</scope>
    <source>
        <strain>cv. Columbia</strain>
    </source>
</reference>
<reference key="3">
    <citation type="journal article" date="2004" name="Cell Struct. Funct.">
        <title>Systematic analysis of SNARE molecules in Arabidopsis: dissection of the post-Golgi network in plant cells.</title>
        <authorList>
            <person name="Uemura T."/>
            <person name="Ueda T."/>
            <person name="Ohniwa R.L."/>
            <person name="Nakano A."/>
            <person name="Takeyasu K."/>
            <person name="Sato M.H."/>
        </authorList>
    </citation>
    <scope>TISSUE SPECIFICITY</scope>
    <scope>SUBCELLULAR LOCATION</scope>
</reference>
<evidence type="ECO:0000250" key="1"/>
<evidence type="ECO:0000250" key="2">
    <source>
        <dbReference type="UniProtKB" id="Q12255"/>
    </source>
</evidence>
<evidence type="ECO:0000255" key="3"/>
<evidence type="ECO:0000255" key="4">
    <source>
        <dbReference type="PROSITE-ProRule" id="PRU00231"/>
    </source>
</evidence>
<evidence type="ECO:0000255" key="5">
    <source>
        <dbReference type="PROSITE-ProRule" id="PRU00290"/>
    </source>
</evidence>
<evidence type="ECO:0000269" key="6">
    <source>
    </source>
</evidence>
<evidence type="ECO:0000305" key="7"/>
<dbReference type="EMBL" id="AC004809">
    <property type="protein sequence ID" value="AAF40460.1"/>
    <property type="status" value="ALT_SEQ"/>
    <property type="molecule type" value="Genomic_DNA"/>
</dbReference>
<dbReference type="EMBL" id="CP002684">
    <property type="protein sequence ID" value="AEE27740.1"/>
    <property type="molecule type" value="Genomic_DNA"/>
</dbReference>
<dbReference type="EMBL" id="CP002684">
    <property type="protein sequence ID" value="ANM61115.1"/>
    <property type="molecule type" value="Genomic_DNA"/>
</dbReference>
<dbReference type="PIR" id="F86180">
    <property type="entry name" value="F86180"/>
</dbReference>
<dbReference type="RefSeq" id="NP_001323352.1">
    <property type="nucleotide sequence ID" value="NM_001331501.1"/>
</dbReference>
<dbReference type="RefSeq" id="NP_171968.1">
    <property type="nucleotide sequence ID" value="NM_100354.2"/>
</dbReference>
<dbReference type="SMR" id="Q9MAS5"/>
<dbReference type="BioGRID" id="24659">
    <property type="interactions" value="5"/>
</dbReference>
<dbReference type="FunCoup" id="Q9MAS5">
    <property type="interactions" value="36"/>
</dbReference>
<dbReference type="IntAct" id="Q9MAS5">
    <property type="interactions" value="1"/>
</dbReference>
<dbReference type="STRING" id="3702.Q9MAS5"/>
<dbReference type="PaxDb" id="3702-AT1G04760.1"/>
<dbReference type="ProteomicsDB" id="243256"/>
<dbReference type="EnsemblPlants" id="AT1G04760.1">
    <property type="protein sequence ID" value="AT1G04760.1"/>
    <property type="gene ID" value="AT1G04760"/>
</dbReference>
<dbReference type="EnsemblPlants" id="AT1G04760.2">
    <property type="protein sequence ID" value="AT1G04760.2"/>
    <property type="gene ID" value="AT1G04760"/>
</dbReference>
<dbReference type="GeneID" id="839424"/>
<dbReference type="Gramene" id="AT1G04760.1">
    <property type="protein sequence ID" value="AT1G04760.1"/>
    <property type="gene ID" value="AT1G04760"/>
</dbReference>
<dbReference type="Gramene" id="AT1G04760.2">
    <property type="protein sequence ID" value="AT1G04760.2"/>
    <property type="gene ID" value="AT1G04760"/>
</dbReference>
<dbReference type="KEGG" id="ath:AT1G04760"/>
<dbReference type="Araport" id="AT1G04760"/>
<dbReference type="TAIR" id="AT1G04760">
    <property type="gene designation" value="VAMP726"/>
</dbReference>
<dbReference type="eggNOG" id="KOG0859">
    <property type="taxonomic scope" value="Eukaryota"/>
</dbReference>
<dbReference type="HOGENOM" id="CLU_064620_1_0_1"/>
<dbReference type="InParanoid" id="Q9MAS5"/>
<dbReference type="OMA" id="MKYCVDN"/>
<dbReference type="PhylomeDB" id="Q9MAS5"/>
<dbReference type="PRO" id="PR:Q9MAS5"/>
<dbReference type="Proteomes" id="UP000006548">
    <property type="component" value="Chromosome 1"/>
</dbReference>
<dbReference type="ExpressionAtlas" id="Q9MAS5">
    <property type="expression patterns" value="baseline and differential"/>
</dbReference>
<dbReference type="GO" id="GO:0031901">
    <property type="term" value="C:early endosome membrane"/>
    <property type="evidence" value="ECO:0007669"/>
    <property type="project" value="UniProtKB-SubCell"/>
</dbReference>
<dbReference type="GO" id="GO:0005768">
    <property type="term" value="C:endosome"/>
    <property type="evidence" value="ECO:0000304"/>
    <property type="project" value="TAIR"/>
</dbReference>
<dbReference type="GO" id="GO:0005886">
    <property type="term" value="C:plasma membrane"/>
    <property type="evidence" value="ECO:0000304"/>
    <property type="project" value="TAIR"/>
</dbReference>
<dbReference type="GO" id="GO:0015031">
    <property type="term" value="P:protein transport"/>
    <property type="evidence" value="ECO:0007669"/>
    <property type="project" value="UniProtKB-KW"/>
</dbReference>
<dbReference type="GO" id="GO:0016192">
    <property type="term" value="P:vesicle-mediated transport"/>
    <property type="evidence" value="ECO:0007669"/>
    <property type="project" value="InterPro"/>
</dbReference>
<dbReference type="CDD" id="cd14824">
    <property type="entry name" value="Longin"/>
    <property type="match status" value="1"/>
</dbReference>
<dbReference type="CDD" id="cd15843">
    <property type="entry name" value="R-SNARE"/>
    <property type="match status" value="1"/>
</dbReference>
<dbReference type="FunFam" id="3.30.450.50:FF:000002">
    <property type="entry name" value="Vesicle-associated membrane protein 722"/>
    <property type="match status" value="1"/>
</dbReference>
<dbReference type="FunFam" id="1.20.5.110:FF:000010">
    <property type="entry name" value="Vesicle-associated membrane protein 726"/>
    <property type="match status" value="1"/>
</dbReference>
<dbReference type="Gene3D" id="1.20.5.110">
    <property type="match status" value="1"/>
</dbReference>
<dbReference type="Gene3D" id="3.30.450.50">
    <property type="entry name" value="Longin domain"/>
    <property type="match status" value="1"/>
</dbReference>
<dbReference type="InterPro" id="IPR011012">
    <property type="entry name" value="Longin-like_dom_sf"/>
</dbReference>
<dbReference type="InterPro" id="IPR010908">
    <property type="entry name" value="Longin_dom"/>
</dbReference>
<dbReference type="InterPro" id="IPR001388">
    <property type="entry name" value="Synaptobrevin-like"/>
</dbReference>
<dbReference type="InterPro" id="IPR051097">
    <property type="entry name" value="Synaptobrevin-like_transport"/>
</dbReference>
<dbReference type="InterPro" id="IPR042855">
    <property type="entry name" value="V_SNARE_CC"/>
</dbReference>
<dbReference type="PANTHER" id="PTHR21136">
    <property type="entry name" value="SNARE PROTEINS"/>
    <property type="match status" value="1"/>
</dbReference>
<dbReference type="PANTHER" id="PTHR21136:SF192">
    <property type="entry name" value="VESICLE-ASSOCIATED MEMBRANE PROTEIN 725-RELATED"/>
    <property type="match status" value="1"/>
</dbReference>
<dbReference type="Pfam" id="PF13774">
    <property type="entry name" value="Longin"/>
    <property type="match status" value="1"/>
</dbReference>
<dbReference type="Pfam" id="PF00957">
    <property type="entry name" value="Synaptobrevin"/>
    <property type="match status" value="1"/>
</dbReference>
<dbReference type="PRINTS" id="PR00219">
    <property type="entry name" value="SYNAPTOBREVN"/>
</dbReference>
<dbReference type="SMART" id="SM01270">
    <property type="entry name" value="Longin"/>
    <property type="match status" value="1"/>
</dbReference>
<dbReference type="SUPFAM" id="SSF58038">
    <property type="entry name" value="SNARE fusion complex"/>
    <property type="match status" value="1"/>
</dbReference>
<dbReference type="SUPFAM" id="SSF64356">
    <property type="entry name" value="SNARE-like"/>
    <property type="match status" value="1"/>
</dbReference>
<dbReference type="PROSITE" id="PS50859">
    <property type="entry name" value="LONGIN"/>
    <property type="match status" value="1"/>
</dbReference>
<dbReference type="PROSITE" id="PS00417">
    <property type="entry name" value="SYNAPTOBREVIN"/>
    <property type="match status" value="1"/>
</dbReference>
<dbReference type="PROSITE" id="PS50892">
    <property type="entry name" value="V_SNARE"/>
    <property type="match status" value="1"/>
</dbReference>
<proteinExistence type="evidence at transcript level"/>
<comment type="function">
    <text evidence="1">Involved in the targeting and/or fusion of transport vesicles to their target membrane.</text>
</comment>
<comment type="subcellular location">
    <subcellularLocation>
        <location evidence="6">Cell membrane</location>
        <topology evidence="2">Single-pass type IV membrane protein</topology>
    </subcellularLocation>
    <subcellularLocation>
        <location evidence="6">Early endosome membrane</location>
        <topology evidence="2">Single-pass type IV membrane protein</topology>
    </subcellularLocation>
</comment>
<comment type="tissue specificity">
    <text evidence="6">Expressed in flowers, leaves, stems and roots.</text>
</comment>
<comment type="similarity">
    <text evidence="7">Belongs to the synaptobrevin family.</text>
</comment>
<comment type="sequence caution" evidence="7">
    <conflict type="erroneous gene model prediction">
        <sequence resource="EMBL-CDS" id="AAF40460"/>
    </conflict>
</comment>
<keyword id="KW-1003">Cell membrane</keyword>
<keyword id="KW-0175">Coiled coil</keyword>
<keyword id="KW-0967">Endosome</keyword>
<keyword id="KW-0472">Membrane</keyword>
<keyword id="KW-0653">Protein transport</keyword>
<keyword id="KW-1185">Reference proteome</keyword>
<keyword id="KW-0812">Transmembrane</keyword>
<keyword id="KW-1133">Transmembrane helix</keyword>
<keyword id="KW-0813">Transport</keyword>
<name>VA726_ARATH</name>
<sequence>MGQQSLIYSFVARGTVILAEYTEFKGNFTSVAAQCLQKLPSSNNKFTYNCDGHTFNYLADNGFTYCVVVIESAGRQIPMAFLERVKEDFNKRYGGGKASTAKANSLNKEFGSKLKEHMQYCADHPEEISKLSKVKAQVTEVKGVMMENIEKVLDRGEKIELLVDKTENLRSQAQDFRTQGTKMKRKLWFENMKIKLIVFGIIVALILIIILSVCHGFKCT</sequence>
<gene>
    <name type="primary">VAMP726</name>
    <name type="ordered locus">At1g04760</name>
    <name type="ORF">F13M7.25</name>
</gene>
<organism>
    <name type="scientific">Arabidopsis thaliana</name>
    <name type="common">Mouse-ear cress</name>
    <dbReference type="NCBI Taxonomy" id="3702"/>
    <lineage>
        <taxon>Eukaryota</taxon>
        <taxon>Viridiplantae</taxon>
        <taxon>Streptophyta</taxon>
        <taxon>Embryophyta</taxon>
        <taxon>Tracheophyta</taxon>
        <taxon>Spermatophyta</taxon>
        <taxon>Magnoliopsida</taxon>
        <taxon>eudicotyledons</taxon>
        <taxon>Gunneridae</taxon>
        <taxon>Pentapetalae</taxon>
        <taxon>rosids</taxon>
        <taxon>malvids</taxon>
        <taxon>Brassicales</taxon>
        <taxon>Brassicaceae</taxon>
        <taxon>Camelineae</taxon>
        <taxon>Arabidopsis</taxon>
    </lineage>
</organism>
<protein>
    <recommendedName>
        <fullName>Putative vesicle-associated membrane protein 726</fullName>
        <shortName>AtVAMP726</shortName>
    </recommendedName>
</protein>